<keyword id="KW-0274">FAD</keyword>
<keyword id="KW-0285">Flavoprotein</keyword>
<keyword id="KW-0521">NADP</keyword>
<keyword id="KW-0560">Oxidoreductase</keyword>
<keyword id="KW-1185">Reference proteome</keyword>
<organism>
    <name type="scientific">Symbiobacterium thermophilum (strain DSM 24528 / JCM 14929 / IAM 14863 / T)</name>
    <dbReference type="NCBI Taxonomy" id="292459"/>
    <lineage>
        <taxon>Bacteria</taxon>
        <taxon>Bacillati</taxon>
        <taxon>Bacillota</taxon>
        <taxon>Clostridia</taxon>
        <taxon>Eubacteriales</taxon>
        <taxon>Symbiobacteriaceae</taxon>
        <taxon>Symbiobacterium</taxon>
    </lineage>
</organism>
<comment type="catalytic activity">
    <reaction evidence="1">
        <text>2 reduced [2Fe-2S]-[ferredoxin] + NADP(+) + H(+) = 2 oxidized [2Fe-2S]-[ferredoxin] + NADPH</text>
        <dbReference type="Rhea" id="RHEA:20125"/>
        <dbReference type="Rhea" id="RHEA-COMP:10000"/>
        <dbReference type="Rhea" id="RHEA-COMP:10001"/>
        <dbReference type="ChEBI" id="CHEBI:15378"/>
        <dbReference type="ChEBI" id="CHEBI:33737"/>
        <dbReference type="ChEBI" id="CHEBI:33738"/>
        <dbReference type="ChEBI" id="CHEBI:57783"/>
        <dbReference type="ChEBI" id="CHEBI:58349"/>
        <dbReference type="EC" id="1.18.1.2"/>
    </reaction>
</comment>
<comment type="cofactor">
    <cofactor evidence="1">
        <name>FAD</name>
        <dbReference type="ChEBI" id="CHEBI:57692"/>
    </cofactor>
    <text evidence="1">Binds 1 FAD per subunit.</text>
</comment>
<comment type="subunit">
    <text evidence="1">Homodimer.</text>
</comment>
<comment type="similarity">
    <text evidence="1">Belongs to the ferredoxin--NADP reductase type 2 family.</text>
</comment>
<reference key="1">
    <citation type="journal article" date="2004" name="Nucleic Acids Res.">
        <title>Genome sequence of Symbiobacterium thermophilum, an uncultivable bacterium that depends on microbial commensalism.</title>
        <authorList>
            <person name="Ueda K."/>
            <person name="Yamashita A."/>
            <person name="Ishikawa J."/>
            <person name="Shimada M."/>
            <person name="Watsuji T."/>
            <person name="Morimura K."/>
            <person name="Ikeda H."/>
            <person name="Hattori M."/>
            <person name="Beppu T."/>
        </authorList>
    </citation>
    <scope>NUCLEOTIDE SEQUENCE [LARGE SCALE GENOMIC DNA]</scope>
    <source>
        <strain>DSM 24528 / JCM 14929 / IAM 14863 / T</strain>
    </source>
</reference>
<protein>
    <recommendedName>
        <fullName evidence="1">Ferredoxin--NADP reductase</fullName>
        <shortName evidence="1">FNR</shortName>
        <shortName evidence="1">Fd-NADP(+) reductase</shortName>
        <ecNumber evidence="1">1.18.1.2</ecNumber>
    </recommendedName>
</protein>
<accession>Q67QU3</accession>
<gene>
    <name type="ordered locus">STH965</name>
</gene>
<evidence type="ECO:0000255" key="1">
    <source>
        <dbReference type="HAMAP-Rule" id="MF_01685"/>
    </source>
</evidence>
<sequence>MSGTKELYDVTLIGAGPTGLFGVFYAGMRGMKTKVIEALPEVGGQLAALYPEKDIFDVAGFPRISAKRLVEQCKEQADSANPDATYVFNQRVDKLNRLEDGTFELVTHTGERHYSKAVIITAGIGAFEPNRIPNESARQYEGKGVFYSVTNLPQFEGKRVLVIGGGDSAVDYALMVEPIAAEVTLIHRRDGFRAHEESLKKLAASRVHVKVFYELRRVEGDGNWVKKATIFDNRTGEETTIDVDCVIIGTGFKASLGSMLEWGLEIENKRQIVVNSKGETNIPGVYAAGDICWYPGKIRLIATGFGEVATAVNNAKAFIDPGSAAFPGHSSEQRNK</sequence>
<feature type="chain" id="PRO_0000364979" description="Ferredoxin--NADP reductase">
    <location>
        <begin position="1"/>
        <end position="336"/>
    </location>
</feature>
<feature type="binding site" evidence="1">
    <location>
        <position position="18"/>
    </location>
    <ligand>
        <name>FAD</name>
        <dbReference type="ChEBI" id="CHEBI:57692"/>
    </ligand>
</feature>
<feature type="binding site" evidence="1">
    <location>
        <position position="37"/>
    </location>
    <ligand>
        <name>FAD</name>
        <dbReference type="ChEBI" id="CHEBI:57692"/>
    </ligand>
</feature>
<feature type="binding site" evidence="1">
    <location>
        <position position="45"/>
    </location>
    <ligand>
        <name>FAD</name>
        <dbReference type="ChEBI" id="CHEBI:57692"/>
    </ligand>
</feature>
<feature type="binding site" evidence="1">
    <location>
        <position position="50"/>
    </location>
    <ligand>
        <name>FAD</name>
        <dbReference type="ChEBI" id="CHEBI:57692"/>
    </ligand>
</feature>
<feature type="binding site" evidence="1">
    <location>
        <position position="92"/>
    </location>
    <ligand>
        <name>FAD</name>
        <dbReference type="ChEBI" id="CHEBI:57692"/>
    </ligand>
</feature>
<feature type="binding site" evidence="1">
    <location>
        <position position="127"/>
    </location>
    <ligand>
        <name>FAD</name>
        <dbReference type="ChEBI" id="CHEBI:57692"/>
    </ligand>
</feature>
<feature type="binding site" evidence="1">
    <location>
        <position position="290"/>
    </location>
    <ligand>
        <name>FAD</name>
        <dbReference type="ChEBI" id="CHEBI:57692"/>
    </ligand>
</feature>
<feature type="binding site" evidence="1">
    <location>
        <position position="331"/>
    </location>
    <ligand>
        <name>FAD</name>
        <dbReference type="ChEBI" id="CHEBI:57692"/>
    </ligand>
</feature>
<name>FENR_SYMTH</name>
<proteinExistence type="inferred from homology"/>
<dbReference type="EC" id="1.18.1.2" evidence="1"/>
<dbReference type="EMBL" id="AP006840">
    <property type="protein sequence ID" value="BAD39950.1"/>
    <property type="molecule type" value="Genomic_DNA"/>
</dbReference>
<dbReference type="SMR" id="Q67QU3"/>
<dbReference type="STRING" id="292459.STH965"/>
<dbReference type="KEGG" id="sth:STH965"/>
<dbReference type="eggNOG" id="COG0492">
    <property type="taxonomic scope" value="Bacteria"/>
</dbReference>
<dbReference type="HOGENOM" id="CLU_031864_5_5_9"/>
<dbReference type="Proteomes" id="UP000000417">
    <property type="component" value="Chromosome"/>
</dbReference>
<dbReference type="GO" id="GO:0004324">
    <property type="term" value="F:ferredoxin-NADP+ reductase activity"/>
    <property type="evidence" value="ECO:0007669"/>
    <property type="project" value="UniProtKB-UniRule"/>
</dbReference>
<dbReference type="GO" id="GO:0050660">
    <property type="term" value="F:flavin adenine dinucleotide binding"/>
    <property type="evidence" value="ECO:0007669"/>
    <property type="project" value="UniProtKB-UniRule"/>
</dbReference>
<dbReference type="GO" id="GO:0050661">
    <property type="term" value="F:NADP binding"/>
    <property type="evidence" value="ECO:0007669"/>
    <property type="project" value="UniProtKB-UniRule"/>
</dbReference>
<dbReference type="Gene3D" id="3.50.50.60">
    <property type="entry name" value="FAD/NAD(P)-binding domain"/>
    <property type="match status" value="2"/>
</dbReference>
<dbReference type="HAMAP" id="MF_01685">
    <property type="entry name" value="FENR2"/>
    <property type="match status" value="1"/>
</dbReference>
<dbReference type="InterPro" id="IPR036188">
    <property type="entry name" value="FAD/NAD-bd_sf"/>
</dbReference>
<dbReference type="InterPro" id="IPR023753">
    <property type="entry name" value="FAD/NAD-binding_dom"/>
</dbReference>
<dbReference type="InterPro" id="IPR022890">
    <property type="entry name" value="Fd--NADP_Rdtase_type_2"/>
</dbReference>
<dbReference type="InterPro" id="IPR050097">
    <property type="entry name" value="Ferredoxin-NADP_redctase_2"/>
</dbReference>
<dbReference type="PANTHER" id="PTHR48105">
    <property type="entry name" value="THIOREDOXIN REDUCTASE 1-RELATED-RELATED"/>
    <property type="match status" value="1"/>
</dbReference>
<dbReference type="Pfam" id="PF07992">
    <property type="entry name" value="Pyr_redox_2"/>
    <property type="match status" value="1"/>
</dbReference>
<dbReference type="PRINTS" id="PR00368">
    <property type="entry name" value="FADPNR"/>
</dbReference>
<dbReference type="PRINTS" id="PR00469">
    <property type="entry name" value="PNDRDTASEII"/>
</dbReference>
<dbReference type="SUPFAM" id="SSF51905">
    <property type="entry name" value="FAD/NAD(P)-binding domain"/>
    <property type="match status" value="1"/>
</dbReference>